<organism>
    <name type="scientific">Brassica napus</name>
    <name type="common">Rape</name>
    <dbReference type="NCBI Taxonomy" id="3708"/>
    <lineage>
        <taxon>Eukaryota</taxon>
        <taxon>Viridiplantae</taxon>
        <taxon>Streptophyta</taxon>
        <taxon>Embryophyta</taxon>
        <taxon>Tracheophyta</taxon>
        <taxon>Spermatophyta</taxon>
        <taxon>Magnoliopsida</taxon>
        <taxon>eudicotyledons</taxon>
        <taxon>Gunneridae</taxon>
        <taxon>Pentapetalae</taxon>
        <taxon>rosids</taxon>
        <taxon>malvids</taxon>
        <taxon>Brassicales</taxon>
        <taxon>Brassicaceae</taxon>
        <taxon>Brassiceae</taxon>
        <taxon>Brassica</taxon>
    </lineage>
</organism>
<dbReference type="EMBL" id="U22105">
    <property type="protein sequence ID" value="AAB37228.1"/>
    <property type="molecule type" value="mRNA"/>
</dbReference>
<dbReference type="PIR" id="T07861">
    <property type="entry name" value="T07861"/>
</dbReference>
<dbReference type="SMR" id="Q42614"/>
<dbReference type="GO" id="GO:0008289">
    <property type="term" value="F:lipid binding"/>
    <property type="evidence" value="ECO:0007669"/>
    <property type="project" value="UniProtKB-KW"/>
</dbReference>
<dbReference type="GO" id="GO:0006869">
    <property type="term" value="P:lipid transport"/>
    <property type="evidence" value="ECO:0007669"/>
    <property type="project" value="InterPro"/>
</dbReference>
<dbReference type="CDD" id="cd01960">
    <property type="entry name" value="nsLTP1"/>
    <property type="match status" value="1"/>
</dbReference>
<dbReference type="FunFam" id="1.10.110.10:FF:000002">
    <property type="entry name" value="Non-specific lipid-transfer protein"/>
    <property type="match status" value="1"/>
</dbReference>
<dbReference type="Gene3D" id="1.10.110.10">
    <property type="entry name" value="Plant lipid-transfer and hydrophobic proteins"/>
    <property type="match status" value="1"/>
</dbReference>
<dbReference type="InterPro" id="IPR036312">
    <property type="entry name" value="Bifun_inhib/LTP/seed_sf"/>
</dbReference>
<dbReference type="InterPro" id="IPR016140">
    <property type="entry name" value="Bifunc_inhib/LTP/seed_store"/>
</dbReference>
<dbReference type="InterPro" id="IPR000528">
    <property type="entry name" value="Plant_nsLTP"/>
</dbReference>
<dbReference type="PANTHER" id="PTHR33076">
    <property type="entry name" value="NON-SPECIFIC LIPID-TRANSFER PROTEIN 2-RELATED"/>
    <property type="match status" value="1"/>
</dbReference>
<dbReference type="Pfam" id="PF00234">
    <property type="entry name" value="Tryp_alpha_amyl"/>
    <property type="match status" value="1"/>
</dbReference>
<dbReference type="PRINTS" id="PR00382">
    <property type="entry name" value="LIPIDTRNSFER"/>
</dbReference>
<dbReference type="SMART" id="SM00499">
    <property type="entry name" value="AAI"/>
    <property type="match status" value="1"/>
</dbReference>
<dbReference type="SUPFAM" id="SSF47699">
    <property type="entry name" value="Bifunctional inhibitor/lipid-transfer protein/seed storage 2S albumin"/>
    <property type="match status" value="1"/>
</dbReference>
<dbReference type="PROSITE" id="PS00597">
    <property type="entry name" value="PLANT_LTP"/>
    <property type="match status" value="1"/>
</dbReference>
<proteinExistence type="inferred from homology"/>
<protein>
    <recommendedName>
        <fullName>Non-specific lipid-transfer protein 1</fullName>
        <shortName>LTP 1</shortName>
    </recommendedName>
</protein>
<name>NLTP1_BRANA</name>
<sequence>MAGLVKLSCLVLACMIVAGPIATNAALSCGTVSGNLAACIGYLTQNGPLPRGCCTGVTNLNNMARTTPDRQQACRCLVGAANAFPTLNAARAAGLPKACGVNIPYKISKSTNCNSVR</sequence>
<reference key="1">
    <citation type="journal article" date="1996" name="Planta">
        <title>Germination-specific lipid transfer protein cDNAs in Brassica napus L.</title>
        <authorList>
            <person name="Soufleri I.A."/>
            <person name="Vergnolle C."/>
            <person name="Miginiac E."/>
            <person name="Kader J.-C."/>
        </authorList>
    </citation>
    <scope>NUCLEOTIDE SEQUENCE [MRNA]</scope>
    <source>
        <strain>cv. Darmor</strain>
    </source>
</reference>
<gene>
    <name type="primary">LTP1</name>
</gene>
<feature type="signal peptide" evidence="1">
    <location>
        <begin position="1"/>
        <end position="25"/>
    </location>
</feature>
<feature type="chain" id="PRO_0000018368" description="Non-specific lipid-transfer protein 1">
    <location>
        <begin position="26"/>
        <end position="117"/>
    </location>
</feature>
<feature type="disulfide bond" evidence="1">
    <location>
        <begin position="29"/>
        <end position="76"/>
    </location>
</feature>
<feature type="disulfide bond" evidence="1">
    <location>
        <begin position="39"/>
        <end position="53"/>
    </location>
</feature>
<feature type="disulfide bond" evidence="1">
    <location>
        <begin position="54"/>
        <end position="99"/>
    </location>
</feature>
<feature type="disulfide bond" evidence="1">
    <location>
        <begin position="74"/>
        <end position="113"/>
    </location>
</feature>
<keyword id="KW-1015">Disulfide bond</keyword>
<keyword id="KW-0446">Lipid-binding</keyword>
<keyword id="KW-0732">Signal</keyword>
<keyword id="KW-0813">Transport</keyword>
<evidence type="ECO:0000255" key="1"/>
<evidence type="ECO:0000305" key="2"/>
<accession>Q42614</accession>
<comment type="function">
    <text>Plant non-specific lipid-transfer proteins transfer phospholipids as well as galactolipids across membranes. May play a role in wax or cutin deposition in the cell walls of expanding epidermal cells and certain secretory tissues.</text>
</comment>
<comment type="similarity">
    <text evidence="2">Belongs to the plant LTP family.</text>
</comment>